<sequence length="83" mass="9130">MQNDAGEFVDLYVPRKCSASNRIIGAKDHASIQINIAEVDKVTGRFNGQFKTYAICGAIRRMGEADDSLLRLAKNDSIVSKNI</sequence>
<keyword id="KW-0963">Cytoplasm</keyword>
<keyword id="KW-0256">Endoplasmic reticulum</keyword>
<keyword id="KW-0687">Ribonucleoprotein</keyword>
<keyword id="KW-0689">Ribosomal protein</keyword>
<evidence type="ECO:0000250" key="1">
    <source>
        <dbReference type="UniProtKB" id="P63220"/>
    </source>
</evidence>
<evidence type="ECO:0000250" key="2">
    <source>
        <dbReference type="UniProtKB" id="P63221"/>
    </source>
</evidence>
<evidence type="ECO:0000305" key="3"/>
<accession>Q90YQ2</accession>
<protein>
    <recommendedName>
        <fullName evidence="3">Small ribosomal subunit protein eS21</fullName>
    </recommendedName>
    <alternativeName>
        <fullName>40S ribosomal protein S21</fullName>
    </alternativeName>
</protein>
<gene>
    <name type="primary">rps21</name>
</gene>
<dbReference type="EMBL" id="AF402830">
    <property type="protein sequence ID" value="AAK95204.1"/>
    <property type="molecule type" value="mRNA"/>
</dbReference>
<dbReference type="RefSeq" id="NP_001187220.1">
    <property type="nucleotide sequence ID" value="NM_001200291.1"/>
</dbReference>
<dbReference type="RefSeq" id="XP_017341772.1">
    <property type="nucleotide sequence ID" value="XM_017486283.2"/>
</dbReference>
<dbReference type="SMR" id="Q90YQ2"/>
<dbReference type="STRING" id="7998.ENSIPUP00000007932"/>
<dbReference type="Ensembl" id="ENSIPUT00015060233">
    <property type="protein sequence ID" value="ENSIPUP00015052725"/>
    <property type="gene ID" value="ENSIPUG00015024106"/>
</dbReference>
<dbReference type="GeneID" id="100305057"/>
<dbReference type="KEGG" id="ipu:100305057"/>
<dbReference type="CTD" id="6227"/>
<dbReference type="OMA" id="GESDACM"/>
<dbReference type="OrthoDB" id="278325at2759"/>
<dbReference type="Proteomes" id="UP000221080">
    <property type="component" value="Chromosome 15"/>
</dbReference>
<dbReference type="GO" id="GO:0022627">
    <property type="term" value="C:cytosolic small ribosomal subunit"/>
    <property type="evidence" value="ECO:0000250"/>
    <property type="project" value="UniProtKB"/>
</dbReference>
<dbReference type="GO" id="GO:0005791">
    <property type="term" value="C:rough endoplasmic reticulum"/>
    <property type="evidence" value="ECO:0007669"/>
    <property type="project" value="UniProtKB-SubCell"/>
</dbReference>
<dbReference type="GO" id="GO:0003735">
    <property type="term" value="F:structural constituent of ribosome"/>
    <property type="evidence" value="ECO:0007669"/>
    <property type="project" value="InterPro"/>
</dbReference>
<dbReference type="GO" id="GO:0002181">
    <property type="term" value="P:cytoplasmic translation"/>
    <property type="evidence" value="ECO:0000250"/>
    <property type="project" value="UniProtKB"/>
</dbReference>
<dbReference type="FunFam" id="3.30.1230.20:FF:000001">
    <property type="entry name" value="40S ribosomal protein S21"/>
    <property type="match status" value="1"/>
</dbReference>
<dbReference type="Gene3D" id="3.30.1230.20">
    <property type="match status" value="1"/>
</dbReference>
<dbReference type="InterPro" id="IPR001931">
    <property type="entry name" value="Ribosomal_eS21"/>
</dbReference>
<dbReference type="InterPro" id="IPR018279">
    <property type="entry name" value="Ribosomal_eS21_CS"/>
</dbReference>
<dbReference type="InterPro" id="IPR038579">
    <property type="entry name" value="Ribosomal_eS21_sf"/>
</dbReference>
<dbReference type="PANTHER" id="PTHR10442">
    <property type="entry name" value="40S RIBOSOMAL PROTEIN S21"/>
    <property type="match status" value="1"/>
</dbReference>
<dbReference type="Pfam" id="PF01249">
    <property type="entry name" value="Ribosomal_S21e"/>
    <property type="match status" value="1"/>
</dbReference>
<dbReference type="PIRSF" id="PIRSF002148">
    <property type="entry name" value="Ribosomal_S21e"/>
    <property type="match status" value="1"/>
</dbReference>
<dbReference type="PROSITE" id="PS00996">
    <property type="entry name" value="RIBOSOMAL_S21E"/>
    <property type="match status" value="1"/>
</dbReference>
<name>RS21_ICTPU</name>
<proteinExistence type="inferred from homology"/>
<reference key="1">
    <citation type="journal article" date="2002" name="Gene">
        <title>Translational machinery of channel catfish: I. A transcriptomic approach to the analysis of 32 40S ribosomal protein genes and their expression.</title>
        <authorList>
            <person name="Karsi A."/>
            <person name="Patterson A."/>
            <person name="Feng J."/>
            <person name="Liu Z.-J."/>
        </authorList>
    </citation>
    <scope>NUCLEOTIDE SEQUENCE [MRNA]</scope>
</reference>
<organism>
    <name type="scientific">Ictalurus punctatus</name>
    <name type="common">Channel catfish</name>
    <name type="synonym">Silurus punctatus</name>
    <dbReference type="NCBI Taxonomy" id="7998"/>
    <lineage>
        <taxon>Eukaryota</taxon>
        <taxon>Metazoa</taxon>
        <taxon>Chordata</taxon>
        <taxon>Craniata</taxon>
        <taxon>Vertebrata</taxon>
        <taxon>Euteleostomi</taxon>
        <taxon>Actinopterygii</taxon>
        <taxon>Neopterygii</taxon>
        <taxon>Teleostei</taxon>
        <taxon>Ostariophysi</taxon>
        <taxon>Siluriformes</taxon>
        <taxon>Ictaluridae</taxon>
        <taxon>Ictalurus</taxon>
    </lineage>
</organism>
<feature type="chain" id="PRO_0000194735" description="Small ribosomal subunit protein eS21">
    <location>
        <begin position="1"/>
        <end position="83"/>
    </location>
</feature>
<comment type="function">
    <text evidence="1">Component of the small ribosomal subunit. The ribosome is a large ribonucleoprotein complex responsible for the synthesis of proteins in the cell.</text>
</comment>
<comment type="subunit">
    <text evidence="1">Component of the 40S small ribosomal subunit.</text>
</comment>
<comment type="subcellular location">
    <subcellularLocation>
        <location evidence="1">Cytoplasm</location>
        <location evidence="1">Cytosol</location>
    </subcellularLocation>
    <subcellularLocation>
        <location evidence="1">Cytoplasm</location>
    </subcellularLocation>
    <subcellularLocation>
        <location evidence="2">Rough endoplasmic reticulum</location>
    </subcellularLocation>
    <text evidence="1 2">Detected on cytosolic polysomes (By similarity). Detected in ribosomes that are associated with the rough endoplasmic reticulum (By similarity).</text>
</comment>
<comment type="similarity">
    <text evidence="3">Belongs to the eukaryotic ribosomal protein eS21 family.</text>
</comment>